<reference key="1">
    <citation type="submission" date="2005-05" db="EMBL/GenBank/DDBJ databases">
        <authorList>
            <consortium name="NIH - Zebrafish Gene Collection (ZGC) project"/>
        </authorList>
    </citation>
    <scope>NUCLEOTIDE SEQUENCE [LARGE SCALE MRNA]</scope>
    <source>
        <tissue>Larva</tissue>
    </source>
</reference>
<feature type="chain" id="PRO_0000266008" description="F-BAR domain only protein 2">
    <location>
        <begin position="1"/>
        <end position="848"/>
    </location>
</feature>
<feature type="domain" description="F-BAR" evidence="4">
    <location>
        <begin position="4"/>
        <end position="250"/>
    </location>
</feature>
<feature type="domain" description="MHD" evidence="3">
    <location>
        <begin position="580"/>
        <end position="848"/>
    </location>
</feature>
<feature type="region of interest" description="Disordered" evidence="5">
    <location>
        <begin position="292"/>
        <end position="316"/>
    </location>
</feature>
<feature type="region of interest" description="Disordered" evidence="5">
    <location>
        <begin position="404"/>
        <end position="526"/>
    </location>
</feature>
<feature type="coiled-coil region" evidence="2">
    <location>
        <begin position="87"/>
        <end position="114"/>
    </location>
</feature>
<feature type="compositionally biased region" description="Low complexity" evidence="5">
    <location>
        <begin position="445"/>
        <end position="460"/>
    </location>
</feature>
<feature type="modified residue" description="Phosphoserine" evidence="1">
    <location>
        <position position="405"/>
    </location>
</feature>
<feature type="modified residue" description="Phosphoserine" evidence="1">
    <location>
        <position position="417"/>
    </location>
</feature>
<accession>Q502I9</accession>
<protein>
    <recommendedName>
        <fullName>F-BAR domain only protein 2</fullName>
    </recommendedName>
</protein>
<organism>
    <name type="scientific">Danio rerio</name>
    <name type="common">Zebrafish</name>
    <name type="synonym">Brachydanio rerio</name>
    <dbReference type="NCBI Taxonomy" id="7955"/>
    <lineage>
        <taxon>Eukaryota</taxon>
        <taxon>Metazoa</taxon>
        <taxon>Chordata</taxon>
        <taxon>Craniata</taxon>
        <taxon>Vertebrata</taxon>
        <taxon>Euteleostomi</taxon>
        <taxon>Actinopterygii</taxon>
        <taxon>Neopterygii</taxon>
        <taxon>Teleostei</taxon>
        <taxon>Ostariophysi</taxon>
        <taxon>Cypriniformes</taxon>
        <taxon>Danionidae</taxon>
        <taxon>Danioninae</taxon>
        <taxon>Danio</taxon>
    </lineage>
</organism>
<dbReference type="EMBL" id="BC095680">
    <property type="protein sequence ID" value="AAH95680.1"/>
    <property type="molecule type" value="mRNA"/>
</dbReference>
<dbReference type="RefSeq" id="NP_001018617.1">
    <property type="nucleotide sequence ID" value="NM_001020781.1"/>
</dbReference>
<dbReference type="SMR" id="Q502I9"/>
<dbReference type="FunCoup" id="Q502I9">
    <property type="interactions" value="1589"/>
</dbReference>
<dbReference type="STRING" id="7955.ENSDARP00000051270"/>
<dbReference type="PaxDb" id="7955-ENSDARP00000051270"/>
<dbReference type="GeneID" id="553949"/>
<dbReference type="KEGG" id="dre:553949"/>
<dbReference type="AGR" id="ZFIN:ZDB-GENE-050522-228"/>
<dbReference type="CTD" id="115548"/>
<dbReference type="ZFIN" id="ZDB-GENE-050522-228">
    <property type="gene designation" value="fcho2"/>
</dbReference>
<dbReference type="eggNOG" id="KOG2398">
    <property type="taxonomic scope" value="Eukaryota"/>
</dbReference>
<dbReference type="InParanoid" id="Q502I9"/>
<dbReference type="OrthoDB" id="5593455at2759"/>
<dbReference type="PhylomeDB" id="Q502I9"/>
<dbReference type="PRO" id="PR:Q502I9"/>
<dbReference type="Proteomes" id="UP000000437">
    <property type="component" value="Alternate scaffold 5"/>
</dbReference>
<dbReference type="Proteomes" id="UP000000437">
    <property type="component" value="Chromosome 5"/>
</dbReference>
<dbReference type="GO" id="GO:0005905">
    <property type="term" value="C:clathrin-coated pit"/>
    <property type="evidence" value="ECO:0000250"/>
    <property type="project" value="UniProtKB"/>
</dbReference>
<dbReference type="GO" id="GO:0030136">
    <property type="term" value="C:clathrin-coated vesicle"/>
    <property type="evidence" value="ECO:0000318"/>
    <property type="project" value="GO_Central"/>
</dbReference>
<dbReference type="GO" id="GO:0005737">
    <property type="term" value="C:cytoplasm"/>
    <property type="evidence" value="ECO:0000318"/>
    <property type="project" value="GO_Central"/>
</dbReference>
<dbReference type="GO" id="GO:0005886">
    <property type="term" value="C:plasma membrane"/>
    <property type="evidence" value="ECO:0000250"/>
    <property type="project" value="UniProtKB"/>
</dbReference>
<dbReference type="GO" id="GO:0098793">
    <property type="term" value="C:presynapse"/>
    <property type="evidence" value="ECO:0007669"/>
    <property type="project" value="GOC"/>
</dbReference>
<dbReference type="GO" id="GO:0035091">
    <property type="term" value="F:phosphatidylinositol binding"/>
    <property type="evidence" value="ECO:0000250"/>
    <property type="project" value="UniProtKB"/>
</dbReference>
<dbReference type="GO" id="GO:0005546">
    <property type="term" value="F:phosphatidylinositol-4,5-bisphosphate binding"/>
    <property type="evidence" value="ECO:0000250"/>
    <property type="project" value="UniProtKB"/>
</dbReference>
<dbReference type="GO" id="GO:0001786">
    <property type="term" value="F:phosphatidylserine binding"/>
    <property type="evidence" value="ECO:0000250"/>
    <property type="project" value="UniProtKB"/>
</dbReference>
<dbReference type="GO" id="GO:0043009">
    <property type="term" value="P:chordate embryonic development"/>
    <property type="evidence" value="ECO:0000315"/>
    <property type="project" value="ZFIN"/>
</dbReference>
<dbReference type="GO" id="GO:0048268">
    <property type="term" value="P:clathrin coat assembly"/>
    <property type="evidence" value="ECO:0000250"/>
    <property type="project" value="UniProtKB"/>
</dbReference>
<dbReference type="GO" id="GO:0072583">
    <property type="term" value="P:clathrin-dependent endocytosis"/>
    <property type="evidence" value="ECO:0000250"/>
    <property type="project" value="UniProtKB"/>
</dbReference>
<dbReference type="GO" id="GO:0060028">
    <property type="term" value="P:convergent extension involved in axis elongation"/>
    <property type="evidence" value="ECO:0000316"/>
    <property type="project" value="ZFIN"/>
</dbReference>
<dbReference type="GO" id="GO:0010324">
    <property type="term" value="P:membrane invagination"/>
    <property type="evidence" value="ECO:0000250"/>
    <property type="project" value="UniProtKB"/>
</dbReference>
<dbReference type="GO" id="GO:0072659">
    <property type="term" value="P:protein localization to plasma membrane"/>
    <property type="evidence" value="ECO:0000250"/>
    <property type="project" value="UniProtKB"/>
</dbReference>
<dbReference type="GO" id="GO:0048488">
    <property type="term" value="P:synaptic vesicle endocytosis"/>
    <property type="evidence" value="ECO:0000318"/>
    <property type="project" value="GO_Central"/>
</dbReference>
<dbReference type="CDD" id="cd07673">
    <property type="entry name" value="F-BAR_FCHO2"/>
    <property type="match status" value="1"/>
</dbReference>
<dbReference type="FunFam" id="1.20.1270.60:FF:000016">
    <property type="entry name" value="FCH domain only protein 2"/>
    <property type="match status" value="1"/>
</dbReference>
<dbReference type="FunFam" id="2.60.40.1170:FF:000005">
    <property type="entry name" value="SH3-containing GRB2-like protein 3-interacting protein 1 isoform X3"/>
    <property type="match status" value="1"/>
</dbReference>
<dbReference type="Gene3D" id="1.20.1270.60">
    <property type="entry name" value="Arfaptin homology (AH) domain/BAR domain"/>
    <property type="match status" value="1"/>
</dbReference>
<dbReference type="InterPro" id="IPR027267">
    <property type="entry name" value="AH/BAR_dom_sf"/>
</dbReference>
<dbReference type="InterPro" id="IPR036168">
    <property type="entry name" value="AP2_Mu_C_sf"/>
</dbReference>
<dbReference type="InterPro" id="IPR031160">
    <property type="entry name" value="F_BAR"/>
</dbReference>
<dbReference type="InterPro" id="IPR001060">
    <property type="entry name" value="FCH_dom"/>
</dbReference>
<dbReference type="InterPro" id="IPR030122">
    <property type="entry name" value="FCHo2_F-BAR"/>
</dbReference>
<dbReference type="InterPro" id="IPR054713">
    <property type="entry name" value="GMIP/FCHO2-like_FCH"/>
</dbReference>
<dbReference type="InterPro" id="IPR028565">
    <property type="entry name" value="MHD"/>
</dbReference>
<dbReference type="InterPro" id="IPR018808">
    <property type="entry name" value="Muniscin_C"/>
</dbReference>
<dbReference type="PANTHER" id="PTHR23065:SF8">
    <property type="entry name" value="F-BAR DOMAIN ONLY PROTEIN 2"/>
    <property type="match status" value="1"/>
</dbReference>
<dbReference type="PANTHER" id="PTHR23065">
    <property type="entry name" value="PROLINE-SERINE-THREONINE PHOSPHATASE INTERACTING PROTEIN 1"/>
    <property type="match status" value="1"/>
</dbReference>
<dbReference type="Pfam" id="PF22699">
    <property type="entry name" value="GMIP-like_FCH"/>
    <property type="match status" value="1"/>
</dbReference>
<dbReference type="Pfam" id="PF10291">
    <property type="entry name" value="muHD"/>
    <property type="match status" value="1"/>
</dbReference>
<dbReference type="SMART" id="SM00055">
    <property type="entry name" value="FCH"/>
    <property type="match status" value="1"/>
</dbReference>
<dbReference type="SUPFAM" id="SSF103657">
    <property type="entry name" value="BAR/IMD domain-like"/>
    <property type="match status" value="1"/>
</dbReference>
<dbReference type="SUPFAM" id="SSF49447">
    <property type="entry name" value="Second domain of Mu2 adaptin subunit (ap50) of ap2 adaptor"/>
    <property type="match status" value="1"/>
</dbReference>
<dbReference type="PROSITE" id="PS51741">
    <property type="entry name" value="F_BAR"/>
    <property type="match status" value="1"/>
</dbReference>
<dbReference type="PROSITE" id="PS51072">
    <property type="entry name" value="MHD"/>
    <property type="match status" value="1"/>
</dbReference>
<gene>
    <name type="primary">fcho2</name>
    <name type="ORF">zgc:112167</name>
</gene>
<evidence type="ECO:0000250" key="1"/>
<evidence type="ECO:0000255" key="2"/>
<evidence type="ECO:0000255" key="3">
    <source>
        <dbReference type="PROSITE-ProRule" id="PRU00404"/>
    </source>
</evidence>
<evidence type="ECO:0000255" key="4">
    <source>
        <dbReference type="PROSITE-ProRule" id="PRU01077"/>
    </source>
</evidence>
<evidence type="ECO:0000256" key="5">
    <source>
        <dbReference type="SAM" id="MobiDB-lite"/>
    </source>
</evidence>
<evidence type="ECO:0000305" key="6"/>
<keyword id="KW-0168">Coated pit</keyword>
<keyword id="KW-0175">Coiled coil</keyword>
<keyword id="KW-0254">Endocytosis</keyword>
<keyword id="KW-0472">Membrane</keyword>
<keyword id="KW-0597">Phosphoprotein</keyword>
<keyword id="KW-1185">Reference proteome</keyword>
<name>FCHO2_DANRE</name>
<comment type="function">
    <text evidence="1">May function in an early step of clathrin-mediated endocytosis.</text>
</comment>
<comment type="subunit">
    <text evidence="1">Homodimer.</text>
</comment>
<comment type="subcellular location">
    <subcellularLocation>
        <location evidence="1">Membrane</location>
        <location evidence="1">Clathrin-coated pit</location>
        <topology evidence="1">Peripheral membrane protein</topology>
        <orientation evidence="1">Cytoplasmic side</orientation>
    </subcellularLocation>
</comment>
<comment type="similarity">
    <text evidence="6">Belongs to the FCHO family.</text>
</comment>
<sequence>MITPYFLENFWGNKNSGFYVLYHNMKHGQISSKELSDFIRERATIEEAYSRSMTKLAKTASNFSQLGTFAPVWDVFKQSTEKLAACHMELVRKLQELIKEVQKYVDEQAKNHKKTKEEVASTLEAVHNIQSVSQALLKSKENYINKTLEQERMRKEGAKQGDLDKAGLKVKKATESYKSYVEKYATAKTEFEQRMTETAQKFQGIEEEHILRMQEIIHSYSLSVEETHIQIGEVQQEFVNNMENTSVESLIEKLAESRGTGKERPGPIEFEECNVSIATEGAKPRKRKTFAIPGRRKEKDTDSTESTEVEAVNASNGAPPGFYGAIDLHNANVPQLDDEGFCIRPEVNENDAKENSFYSSSDSEDEDEPRKFHVQIKPVQTNNGTHQHKVTIDELKASIGNISLSPTPAVHMKRNQSNDELARPKIPQPPLNDRFSSNDLLSLDPFGPTSTGSSSSLPQSSVPPPNRPTTPLGTSSIVPPPRPLSRPKLATGKLTGITESGRPFSPPKLLNSSPPPPAAPLARAESFSSLSSNTSLSASNTPTVEDDVFVGKLPTFEKRCETPAGTSRGPSPVTLASQDALPIAVAFTESVNAYFKGADPSKCIVKITGDMTLSFPSGIIKIFTSSPSPAVLSFKLLNASRLEQIMPNQQLLHSDSSQSDTNTKDFWMNMPALTSFLRKSSEQNPAASYYNVDILKYQVCSNGIQSTPLNLVVYWKCSRSTTDLRVDYRYNPEAMQPPAPLTNVQVLVPVNGGVMNMQSLPNAIWNAEQNKSLWKLSDISDKSENEGSGSLRAKFELSEGPSIPATLAVQFFSEGSSLSGVDMELAGSGYRLSLNKKRFATGRYMADC</sequence>
<proteinExistence type="evidence at transcript level"/>